<gene>
    <name evidence="1" type="primary">lpxA</name>
    <name type="ordered locus">PD_0323</name>
</gene>
<protein>
    <recommendedName>
        <fullName evidence="1">Acyl-[acyl-carrier-protein]--UDP-N-acetylglucosamine O-acyltransferase</fullName>
        <shortName evidence="1">UDP-N-acetylglucosamine acyltransferase</shortName>
        <ecNumber evidence="1">2.3.1.129</ecNumber>
    </recommendedName>
</protein>
<dbReference type="EC" id="2.3.1.129" evidence="1"/>
<dbReference type="EMBL" id="AE009442">
    <property type="protein sequence ID" value="AAO28207.1"/>
    <property type="molecule type" value="Genomic_DNA"/>
</dbReference>
<dbReference type="RefSeq" id="WP_011097591.1">
    <property type="nucleotide sequence ID" value="NC_004556.1"/>
</dbReference>
<dbReference type="SMR" id="Q87EI4"/>
<dbReference type="GeneID" id="93904024"/>
<dbReference type="KEGG" id="xft:PD_0323"/>
<dbReference type="HOGENOM" id="CLU_061249_0_0_6"/>
<dbReference type="UniPathway" id="UPA00359">
    <property type="reaction ID" value="UER00477"/>
</dbReference>
<dbReference type="Proteomes" id="UP000002516">
    <property type="component" value="Chromosome"/>
</dbReference>
<dbReference type="GO" id="GO:0005737">
    <property type="term" value="C:cytoplasm"/>
    <property type="evidence" value="ECO:0007669"/>
    <property type="project" value="UniProtKB-SubCell"/>
</dbReference>
<dbReference type="GO" id="GO:0016020">
    <property type="term" value="C:membrane"/>
    <property type="evidence" value="ECO:0007669"/>
    <property type="project" value="GOC"/>
</dbReference>
<dbReference type="GO" id="GO:0008780">
    <property type="term" value="F:acyl-[acyl-carrier-protein]-UDP-N-acetylglucosamine O-acyltransferase activity"/>
    <property type="evidence" value="ECO:0007669"/>
    <property type="project" value="UniProtKB-UniRule"/>
</dbReference>
<dbReference type="GO" id="GO:0009245">
    <property type="term" value="P:lipid A biosynthetic process"/>
    <property type="evidence" value="ECO:0007669"/>
    <property type="project" value="UniProtKB-UniRule"/>
</dbReference>
<dbReference type="CDD" id="cd03351">
    <property type="entry name" value="LbH_UDP-GlcNAc_AT"/>
    <property type="match status" value="1"/>
</dbReference>
<dbReference type="Gene3D" id="2.160.10.10">
    <property type="entry name" value="Hexapeptide repeat proteins"/>
    <property type="match status" value="1"/>
</dbReference>
<dbReference type="Gene3D" id="1.20.1180.10">
    <property type="entry name" value="Udp N-acetylglucosamine O-acyltransferase, C-terminal domain"/>
    <property type="match status" value="1"/>
</dbReference>
<dbReference type="HAMAP" id="MF_00387">
    <property type="entry name" value="LpxA"/>
    <property type="match status" value="1"/>
</dbReference>
<dbReference type="InterPro" id="IPR029098">
    <property type="entry name" value="Acetyltransf_C"/>
</dbReference>
<dbReference type="InterPro" id="IPR037157">
    <property type="entry name" value="Acetyltransf_C_sf"/>
</dbReference>
<dbReference type="InterPro" id="IPR001451">
    <property type="entry name" value="Hexapep"/>
</dbReference>
<dbReference type="InterPro" id="IPR010137">
    <property type="entry name" value="Lipid_A_LpxA"/>
</dbReference>
<dbReference type="InterPro" id="IPR011004">
    <property type="entry name" value="Trimer_LpxA-like_sf"/>
</dbReference>
<dbReference type="NCBIfam" id="TIGR01852">
    <property type="entry name" value="lipid_A_lpxA"/>
    <property type="match status" value="1"/>
</dbReference>
<dbReference type="NCBIfam" id="NF003657">
    <property type="entry name" value="PRK05289.1"/>
    <property type="match status" value="1"/>
</dbReference>
<dbReference type="PANTHER" id="PTHR43480">
    <property type="entry name" value="ACYL-[ACYL-CARRIER-PROTEIN]--UDP-N-ACETYLGLUCOSAMINE O-ACYLTRANSFERASE"/>
    <property type="match status" value="1"/>
</dbReference>
<dbReference type="PANTHER" id="PTHR43480:SF1">
    <property type="entry name" value="ACYL-[ACYL-CARRIER-PROTEIN]--UDP-N-ACETYLGLUCOSAMINE O-ACYLTRANSFERASE, MITOCHONDRIAL-RELATED"/>
    <property type="match status" value="1"/>
</dbReference>
<dbReference type="Pfam" id="PF13720">
    <property type="entry name" value="Acetyltransf_11"/>
    <property type="match status" value="1"/>
</dbReference>
<dbReference type="Pfam" id="PF00132">
    <property type="entry name" value="Hexapep"/>
    <property type="match status" value="1"/>
</dbReference>
<dbReference type="PIRSF" id="PIRSF000456">
    <property type="entry name" value="UDP-GlcNAc_acltr"/>
    <property type="match status" value="1"/>
</dbReference>
<dbReference type="SUPFAM" id="SSF51161">
    <property type="entry name" value="Trimeric LpxA-like enzymes"/>
    <property type="match status" value="1"/>
</dbReference>
<comment type="function">
    <text evidence="1">Involved in the biosynthesis of lipid A, a phosphorylated glycolipid that anchors the lipopolysaccharide to the outer membrane of the cell.</text>
</comment>
<comment type="catalytic activity">
    <reaction evidence="1">
        <text>a (3R)-hydroxyacyl-[ACP] + UDP-N-acetyl-alpha-D-glucosamine = a UDP-3-O-[(3R)-3-hydroxyacyl]-N-acetyl-alpha-D-glucosamine + holo-[ACP]</text>
        <dbReference type="Rhea" id="RHEA:67812"/>
        <dbReference type="Rhea" id="RHEA-COMP:9685"/>
        <dbReference type="Rhea" id="RHEA-COMP:9945"/>
        <dbReference type="ChEBI" id="CHEBI:57705"/>
        <dbReference type="ChEBI" id="CHEBI:64479"/>
        <dbReference type="ChEBI" id="CHEBI:78827"/>
        <dbReference type="ChEBI" id="CHEBI:173225"/>
        <dbReference type="EC" id="2.3.1.129"/>
    </reaction>
</comment>
<comment type="pathway">
    <text evidence="1">Glycolipid biosynthesis; lipid IV(A) biosynthesis; lipid IV(A) from (3R)-3-hydroxytetradecanoyl-[acyl-carrier-protein] and UDP-N-acetyl-alpha-D-glucosamine: step 1/6.</text>
</comment>
<comment type="subunit">
    <text evidence="1">Homotrimer.</text>
</comment>
<comment type="subcellular location">
    <subcellularLocation>
        <location evidence="1">Cytoplasm</location>
    </subcellularLocation>
</comment>
<comment type="similarity">
    <text evidence="1">Belongs to the transferase hexapeptide repeat family. LpxA subfamily.</text>
</comment>
<sequence>MNKHASLIHPTAVIAPSATLAPDVQIGAFTLIGNDVQIDTGTIIGSHCTIHGPTRIGRNNRFIGQAAIGGEPQDKKFAGERTELLIGDNNTIREFVTINRGTGGGGGVTSIGNDNWILAYTHIAHDCHVGHHCVFSNNASLAGHVTVGDWVIFSGFSGAHQFCRIGRYAFIGMGTLINGDVPPFTLIGSDTLGRPRGINNEGLKRRNFTPERITAIKRAYRTLYVAGLPLAEAKQQLAEQAKDNDDIKELLQFIETAQRPLLR</sequence>
<reference key="1">
    <citation type="journal article" date="2003" name="J. Bacteriol.">
        <title>Comparative analyses of the complete genome sequences of Pierce's disease and citrus variegated chlorosis strains of Xylella fastidiosa.</title>
        <authorList>
            <person name="Van Sluys M.A."/>
            <person name="de Oliveira M.C."/>
            <person name="Monteiro-Vitorello C.B."/>
            <person name="Miyaki C.Y."/>
            <person name="Furlan L.R."/>
            <person name="Camargo L.E.A."/>
            <person name="da Silva A.C.R."/>
            <person name="Moon D.H."/>
            <person name="Takita M.A."/>
            <person name="Lemos E.G.M."/>
            <person name="Machado M.A."/>
            <person name="Ferro M.I.T."/>
            <person name="da Silva F.R."/>
            <person name="Goldman M.H.S."/>
            <person name="Goldman G.H."/>
            <person name="Lemos M.V.F."/>
            <person name="El-Dorry H."/>
            <person name="Tsai S.M."/>
            <person name="Carrer H."/>
            <person name="Carraro D.M."/>
            <person name="de Oliveira R.C."/>
            <person name="Nunes L.R."/>
            <person name="Siqueira W.J."/>
            <person name="Coutinho L.L."/>
            <person name="Kimura E.T."/>
            <person name="Ferro E.S."/>
            <person name="Harakava R."/>
            <person name="Kuramae E.E."/>
            <person name="Marino C.L."/>
            <person name="Giglioti E."/>
            <person name="Abreu I.L."/>
            <person name="Alves L.M.C."/>
            <person name="do Amaral A.M."/>
            <person name="Baia G.S."/>
            <person name="Blanco S.R."/>
            <person name="Brito M.S."/>
            <person name="Cannavan F.S."/>
            <person name="Celestino A.V."/>
            <person name="da Cunha A.F."/>
            <person name="Fenille R.C."/>
            <person name="Ferro J.A."/>
            <person name="Formighieri E.F."/>
            <person name="Kishi L.T."/>
            <person name="Leoni S.G."/>
            <person name="Oliveira A.R."/>
            <person name="Rosa V.E. Jr."/>
            <person name="Sassaki F.T."/>
            <person name="Sena J.A.D."/>
            <person name="de Souza A.A."/>
            <person name="Truffi D."/>
            <person name="Tsukumo F."/>
            <person name="Yanai G.M."/>
            <person name="Zaros L.G."/>
            <person name="Civerolo E.L."/>
            <person name="Simpson A.J.G."/>
            <person name="Almeida N.F. Jr."/>
            <person name="Setubal J.C."/>
            <person name="Kitajima J.P."/>
        </authorList>
    </citation>
    <scope>NUCLEOTIDE SEQUENCE [LARGE SCALE GENOMIC DNA]</scope>
    <source>
        <strain>Temecula1 / ATCC 700964</strain>
    </source>
</reference>
<evidence type="ECO:0000255" key="1">
    <source>
        <dbReference type="HAMAP-Rule" id="MF_00387"/>
    </source>
</evidence>
<keyword id="KW-0012">Acyltransferase</keyword>
<keyword id="KW-0963">Cytoplasm</keyword>
<keyword id="KW-0441">Lipid A biosynthesis</keyword>
<keyword id="KW-0444">Lipid biosynthesis</keyword>
<keyword id="KW-0443">Lipid metabolism</keyword>
<keyword id="KW-1185">Reference proteome</keyword>
<keyword id="KW-0677">Repeat</keyword>
<keyword id="KW-0808">Transferase</keyword>
<proteinExistence type="inferred from homology"/>
<organism>
    <name type="scientific">Xylella fastidiosa (strain Temecula1 / ATCC 700964)</name>
    <dbReference type="NCBI Taxonomy" id="183190"/>
    <lineage>
        <taxon>Bacteria</taxon>
        <taxon>Pseudomonadati</taxon>
        <taxon>Pseudomonadota</taxon>
        <taxon>Gammaproteobacteria</taxon>
        <taxon>Lysobacterales</taxon>
        <taxon>Lysobacteraceae</taxon>
        <taxon>Xylella</taxon>
    </lineage>
</organism>
<feature type="chain" id="PRO_0000188079" description="Acyl-[acyl-carrier-protein]--UDP-N-acetylglucosamine O-acyltransferase">
    <location>
        <begin position="1"/>
        <end position="263"/>
    </location>
</feature>
<accession>Q87EI4</accession>
<name>LPXA_XYLFT</name>